<feature type="chain" id="PRO_0000109536" description="Probable signal peptidase I-2">
    <location>
        <begin position="1"/>
        <end position="218"/>
    </location>
</feature>
<feature type="topological domain" description="Cytoplasmic" evidence="2">
    <location>
        <begin position="1"/>
        <end position="26"/>
    </location>
</feature>
<feature type="transmembrane region" description="Helical" evidence="2">
    <location>
        <begin position="27"/>
        <end position="43"/>
    </location>
</feature>
<feature type="topological domain" description="Periplasmic" evidence="2">
    <location>
        <begin position="44"/>
        <end position="218"/>
    </location>
</feature>
<feature type="active site" evidence="1">
    <location>
        <position position="52"/>
    </location>
</feature>
<feature type="active site" evidence="1">
    <location>
        <position position="100"/>
    </location>
</feature>
<dbReference type="EC" id="3.4.21.89"/>
<dbReference type="EMBL" id="BA000022">
    <property type="protein sequence ID" value="BAA17183.1"/>
    <property type="molecule type" value="Genomic_DNA"/>
</dbReference>
<dbReference type="PIR" id="S75269">
    <property type="entry name" value="S75269"/>
</dbReference>
<dbReference type="SMR" id="P73157"/>
<dbReference type="FunCoup" id="P73157">
    <property type="interactions" value="406"/>
</dbReference>
<dbReference type="STRING" id="1148.gene:10498046"/>
<dbReference type="MEROPS" id="S26.008"/>
<dbReference type="PaxDb" id="1148-1652260"/>
<dbReference type="EnsemblBacteria" id="BAA17183">
    <property type="protein sequence ID" value="BAA17183"/>
    <property type="gene ID" value="BAA17183"/>
</dbReference>
<dbReference type="KEGG" id="syn:slr1377"/>
<dbReference type="eggNOG" id="COG0681">
    <property type="taxonomic scope" value="Bacteria"/>
</dbReference>
<dbReference type="InParanoid" id="P73157"/>
<dbReference type="PhylomeDB" id="P73157"/>
<dbReference type="Proteomes" id="UP000001425">
    <property type="component" value="Chromosome"/>
</dbReference>
<dbReference type="GO" id="GO:0005886">
    <property type="term" value="C:plasma membrane"/>
    <property type="evidence" value="ECO:0007669"/>
    <property type="project" value="UniProtKB-SubCell"/>
</dbReference>
<dbReference type="GO" id="GO:0004252">
    <property type="term" value="F:serine-type endopeptidase activity"/>
    <property type="evidence" value="ECO:0000318"/>
    <property type="project" value="GO_Central"/>
</dbReference>
<dbReference type="GO" id="GO:0006465">
    <property type="term" value="P:signal peptide processing"/>
    <property type="evidence" value="ECO:0000318"/>
    <property type="project" value="GO_Central"/>
</dbReference>
<dbReference type="CDD" id="cd06530">
    <property type="entry name" value="S26_SPase_I"/>
    <property type="match status" value="1"/>
</dbReference>
<dbReference type="Gene3D" id="2.10.109.10">
    <property type="entry name" value="Umud Fragment, subunit A"/>
    <property type="match status" value="1"/>
</dbReference>
<dbReference type="InterPro" id="IPR036286">
    <property type="entry name" value="LexA/Signal_pep-like_sf"/>
</dbReference>
<dbReference type="InterPro" id="IPR000223">
    <property type="entry name" value="Pept_S26A_signal_pept_1"/>
</dbReference>
<dbReference type="InterPro" id="IPR019758">
    <property type="entry name" value="Pept_S26A_signal_pept_1_CS"/>
</dbReference>
<dbReference type="InterPro" id="IPR019757">
    <property type="entry name" value="Pept_S26A_signal_pept_1_Lys-AS"/>
</dbReference>
<dbReference type="InterPro" id="IPR019756">
    <property type="entry name" value="Pept_S26A_signal_pept_1_Ser-AS"/>
</dbReference>
<dbReference type="InterPro" id="IPR019533">
    <property type="entry name" value="Peptidase_S26"/>
</dbReference>
<dbReference type="NCBIfam" id="TIGR02227">
    <property type="entry name" value="sigpep_I_bact"/>
    <property type="match status" value="1"/>
</dbReference>
<dbReference type="PANTHER" id="PTHR43390:SF1">
    <property type="entry name" value="CHLOROPLAST PROCESSING PEPTIDASE"/>
    <property type="match status" value="1"/>
</dbReference>
<dbReference type="PANTHER" id="PTHR43390">
    <property type="entry name" value="SIGNAL PEPTIDASE I"/>
    <property type="match status" value="1"/>
</dbReference>
<dbReference type="Pfam" id="PF10502">
    <property type="entry name" value="Peptidase_S26"/>
    <property type="match status" value="1"/>
</dbReference>
<dbReference type="PRINTS" id="PR00727">
    <property type="entry name" value="LEADERPTASE"/>
</dbReference>
<dbReference type="SUPFAM" id="SSF51306">
    <property type="entry name" value="LexA/Signal peptidase"/>
    <property type="match status" value="1"/>
</dbReference>
<dbReference type="PROSITE" id="PS00501">
    <property type="entry name" value="SPASE_I_1"/>
    <property type="match status" value="1"/>
</dbReference>
<dbReference type="PROSITE" id="PS00760">
    <property type="entry name" value="SPASE_I_2"/>
    <property type="match status" value="1"/>
</dbReference>
<dbReference type="PROSITE" id="PS00761">
    <property type="entry name" value="SPASE_I_3"/>
    <property type="match status" value="1"/>
</dbReference>
<comment type="catalytic activity">
    <reaction>
        <text>Cleavage of hydrophobic, N-terminal signal or leader sequences from secreted and periplasmic proteins.</text>
        <dbReference type="EC" id="3.4.21.89"/>
    </reaction>
</comment>
<comment type="subcellular location">
    <subcellularLocation>
        <location evidence="3">Cell membrane</location>
        <topology evidence="3">Single-pass type II membrane protein</topology>
    </subcellularLocation>
</comment>
<comment type="similarity">
    <text evidence="3">Belongs to the peptidase S26 family.</text>
</comment>
<accession>P73157</accession>
<protein>
    <recommendedName>
        <fullName>Probable signal peptidase I-2</fullName>
        <shortName>SPase I-2</shortName>
        <ecNumber>3.4.21.89</ecNumber>
    </recommendedName>
    <alternativeName>
        <fullName>Leader peptidase I-2</fullName>
    </alternativeName>
</protein>
<proteinExistence type="inferred from homology"/>
<reference key="1">
    <citation type="journal article" date="1996" name="DNA Res.">
        <title>Sequence analysis of the genome of the unicellular cyanobacterium Synechocystis sp. strain PCC6803. II. Sequence determination of the entire genome and assignment of potential protein-coding regions.</title>
        <authorList>
            <person name="Kaneko T."/>
            <person name="Sato S."/>
            <person name="Kotani H."/>
            <person name="Tanaka A."/>
            <person name="Asamizu E."/>
            <person name="Nakamura Y."/>
            <person name="Miyajima N."/>
            <person name="Hirosawa M."/>
            <person name="Sugiura M."/>
            <person name="Sasamoto S."/>
            <person name="Kimura T."/>
            <person name="Hosouchi T."/>
            <person name="Matsuno A."/>
            <person name="Muraki A."/>
            <person name="Nakazaki N."/>
            <person name="Naruo K."/>
            <person name="Okumura S."/>
            <person name="Shimpo S."/>
            <person name="Takeuchi C."/>
            <person name="Wada T."/>
            <person name="Watanabe A."/>
            <person name="Yamada M."/>
            <person name="Yasuda M."/>
            <person name="Tabata S."/>
        </authorList>
    </citation>
    <scope>NUCLEOTIDE SEQUENCE [LARGE SCALE GENOMIC DNA]</scope>
    <source>
        <strain>ATCC 27184 / PCC 6803 / Kazusa</strain>
    </source>
</reference>
<keyword id="KW-1003">Cell membrane</keyword>
<keyword id="KW-0378">Hydrolase</keyword>
<keyword id="KW-0472">Membrane</keyword>
<keyword id="KW-0645">Protease</keyword>
<keyword id="KW-1185">Reference proteome</keyword>
<keyword id="KW-0812">Transmembrane</keyword>
<keyword id="KW-1133">Transmembrane helix</keyword>
<sequence length="218" mass="24733">MTENIVRETSKKKESPPENTWLELGKTMVTAVILAIGIRTFVAEARYIPSSSMEPTLQINDRLIIEKISYRLRDPERGEIVVFNPTDALKAKNFHDAFIKRIIGLPGDEVRVSQGNVYVNGKMLDENYIAAPPAYEYGPVKVPDDQYLVLGDNRNNSYDSHYWGFVPREKLLGRAFVRFWPVPRVGLLTDDAEREAVEISPQAWESPAISPQTVPESR</sequence>
<gene>
    <name type="primary">lepB2</name>
    <name type="ordered locus">slr1377</name>
</gene>
<evidence type="ECO:0000250" key="1"/>
<evidence type="ECO:0000255" key="2"/>
<evidence type="ECO:0000305" key="3"/>
<name>LEP2_SYNY3</name>
<organism>
    <name type="scientific">Synechocystis sp. (strain ATCC 27184 / PCC 6803 / Kazusa)</name>
    <dbReference type="NCBI Taxonomy" id="1111708"/>
    <lineage>
        <taxon>Bacteria</taxon>
        <taxon>Bacillati</taxon>
        <taxon>Cyanobacteriota</taxon>
        <taxon>Cyanophyceae</taxon>
        <taxon>Synechococcales</taxon>
        <taxon>Merismopediaceae</taxon>
        <taxon>Synechocystis</taxon>
    </lineage>
</organism>